<proteinExistence type="inferred from homology"/>
<sequence length="326" mass="37006">MNSEHPMTDRVVYRSLMADNLRWDALQLRDGDIIISAPSKSGLTWTQRLVSLLVFDGPDLPGPLSTVSPWLDQTIRPIEEVVATLDAQQHRRFIKTHTPLDGLVLDDRVSYICVGRDPRDAAVSMLYQSANMNEDRMRILHEAVVPFHERIAPPFAELGHARSPTEEFRDWMEGPNQPPPGIGFTHLKGIGTLANILHQLGTVWVRRHLPNVALFHYADYQADLAGELLRPARVLGIAATRDRARDLAQYATLDAMRSRASEIAPNTTDGIWHSDERFFRRGGSGDWQQFFTEAEHLRYYHRINQLAPPDLLAWAHEGRRGYDPAN</sequence>
<feature type="chain" id="PRO_0000315392" description="Glycolipid sulfotransferase MRA_1383">
    <location>
        <begin position="1"/>
        <end position="326"/>
    </location>
</feature>
<feature type="active site" description="Proton acceptor" evidence="2">
    <location>
        <position position="97"/>
    </location>
</feature>
<feature type="binding site" evidence="1">
    <location>
        <begin position="40"/>
        <end position="45"/>
    </location>
    <ligand>
        <name>3'-phosphoadenylyl sulfate</name>
        <dbReference type="ChEBI" id="CHEBI:58339"/>
    </ligand>
</feature>
<feature type="binding site" evidence="1">
    <location>
        <begin position="116"/>
        <end position="124"/>
    </location>
    <ligand>
        <name>3'-phosphoadenylyl sulfate</name>
        <dbReference type="ChEBI" id="CHEBI:58339"/>
    </ligand>
</feature>
<name>GLST_MYCTA</name>
<comment type="function">
    <text evidence="1">Involved in the synthesis of cell wall sulfolipids.</text>
</comment>
<comment type="similarity">
    <text evidence="3">Belongs to the sulfotransferase 1 family.</text>
</comment>
<keyword id="KW-1185">Reference proteome</keyword>
<keyword id="KW-0808">Transferase</keyword>
<reference key="1">
    <citation type="journal article" date="2008" name="PLoS ONE">
        <title>Genetic basis of virulence attenuation revealed by comparative genomic analysis of Mycobacterium tuberculosis strain H37Ra versus H37Rv.</title>
        <authorList>
            <person name="Zheng H."/>
            <person name="Lu L."/>
            <person name="Wang B."/>
            <person name="Pu S."/>
            <person name="Zhang X."/>
            <person name="Zhu G."/>
            <person name="Shi W."/>
            <person name="Zhang L."/>
            <person name="Wang H."/>
            <person name="Wang S."/>
            <person name="Zhao G."/>
            <person name="Zhang Y."/>
        </authorList>
    </citation>
    <scope>NUCLEOTIDE SEQUENCE [LARGE SCALE GENOMIC DNA]</scope>
    <source>
        <strain>ATCC 25177 / H37Ra</strain>
    </source>
</reference>
<reference key="2">
    <citation type="journal article" date="2002" name="Microbiology">
        <title>Molecular cloning and expression of a novel glycolipid sulfotransferase in Mycobacterium tuberculosis.</title>
        <authorList>
            <person name="Rivera-Marrero C.A."/>
            <person name="Ritzenthaler J.D."/>
            <person name="Newburn S.A."/>
            <person name="Roman J."/>
            <person name="Cummings R.D."/>
        </authorList>
    </citation>
    <scope>SULFOTRANSFERASE ACTIVITY</scope>
</reference>
<protein>
    <recommendedName>
        <fullName>Glycolipid sulfotransferase MRA_1383</fullName>
        <ecNumber>2.8.2.-</ecNumber>
    </recommendedName>
</protein>
<organism>
    <name type="scientific">Mycobacterium tuberculosis (strain ATCC 25177 / H37Ra)</name>
    <dbReference type="NCBI Taxonomy" id="419947"/>
    <lineage>
        <taxon>Bacteria</taxon>
        <taxon>Bacillati</taxon>
        <taxon>Actinomycetota</taxon>
        <taxon>Actinomycetes</taxon>
        <taxon>Mycobacteriales</taxon>
        <taxon>Mycobacteriaceae</taxon>
        <taxon>Mycobacterium</taxon>
        <taxon>Mycobacterium tuberculosis complex</taxon>
    </lineage>
</organism>
<gene>
    <name type="ordered locus">MRA_1383</name>
</gene>
<evidence type="ECO:0000250" key="1"/>
<evidence type="ECO:0000255" key="2"/>
<evidence type="ECO:0000305" key="3"/>
<accession>A5U275</accession>
<dbReference type="EC" id="2.8.2.-"/>
<dbReference type="EMBL" id="CP000611">
    <property type="protein sequence ID" value="ABQ73125.1"/>
    <property type="molecule type" value="Genomic_DNA"/>
</dbReference>
<dbReference type="RefSeq" id="WP_003898849.1">
    <property type="nucleotide sequence ID" value="NZ_CP016972.1"/>
</dbReference>
<dbReference type="SMR" id="A5U275"/>
<dbReference type="KEGG" id="mra:MRA_1383"/>
<dbReference type="eggNOG" id="ENOG502ZA0J">
    <property type="taxonomic scope" value="Bacteria"/>
</dbReference>
<dbReference type="HOGENOM" id="CLU_027239_3_0_11"/>
<dbReference type="Proteomes" id="UP000001988">
    <property type="component" value="Chromosome"/>
</dbReference>
<dbReference type="GO" id="GO:0008146">
    <property type="term" value="F:sulfotransferase activity"/>
    <property type="evidence" value="ECO:0007669"/>
    <property type="project" value="InterPro"/>
</dbReference>
<dbReference type="FunFam" id="3.40.50.300:FF:003311">
    <property type="entry name" value="Glycolipid sulfotransferase BCG_1434"/>
    <property type="match status" value="1"/>
</dbReference>
<dbReference type="Gene3D" id="3.40.50.300">
    <property type="entry name" value="P-loop containing nucleotide triphosphate hydrolases"/>
    <property type="match status" value="1"/>
</dbReference>
<dbReference type="InterPro" id="IPR027417">
    <property type="entry name" value="P-loop_NTPase"/>
</dbReference>
<dbReference type="InterPro" id="IPR000863">
    <property type="entry name" value="Sulfotransferase_dom"/>
</dbReference>
<dbReference type="PANTHER" id="PTHR11783">
    <property type="entry name" value="SULFOTRANSFERASE SULT"/>
    <property type="match status" value="1"/>
</dbReference>
<dbReference type="Pfam" id="PF00685">
    <property type="entry name" value="Sulfotransfer_1"/>
    <property type="match status" value="1"/>
</dbReference>
<dbReference type="SUPFAM" id="SSF52540">
    <property type="entry name" value="P-loop containing nucleoside triphosphate hydrolases"/>
    <property type="match status" value="1"/>
</dbReference>